<name>PSBZ_HUPLU</name>
<reference key="1">
    <citation type="journal article" date="2005" name="Gene">
        <title>The first complete chloroplast genome sequence of a lycophyte, Huperzia lucidula (Lycopodiaceae).</title>
        <authorList>
            <person name="Wolf P.G."/>
            <person name="Karol K.G."/>
            <person name="Mandoli D.F."/>
            <person name="Kuehl J.V."/>
            <person name="Arumuganathan K."/>
            <person name="Ellis M.W."/>
            <person name="Mishler B.D."/>
            <person name="Kelch D.G."/>
            <person name="Olmstead R.G."/>
            <person name="Boore J.L."/>
        </authorList>
    </citation>
    <scope>NUCLEOTIDE SEQUENCE [LARGE SCALE GENOMIC DNA]</scope>
</reference>
<feature type="chain" id="PRO_0000217707" description="Photosystem II reaction center protein Z">
    <location>
        <begin position="1"/>
        <end position="62"/>
    </location>
</feature>
<feature type="transmembrane region" description="Helical" evidence="1">
    <location>
        <begin position="8"/>
        <end position="28"/>
    </location>
</feature>
<feature type="transmembrane region" description="Helical" evidence="1">
    <location>
        <begin position="41"/>
        <end position="61"/>
    </location>
</feature>
<comment type="function">
    <text evidence="1">May control the interaction of photosystem II (PSII) cores with the light-harvesting antenna, regulates electron flow through the 2 photosystem reaction centers. PSII is a light-driven water plastoquinone oxidoreductase, using light energy to abstract electrons from H(2)O, generating a proton gradient subsequently used for ATP formation.</text>
</comment>
<comment type="subunit">
    <text evidence="1">PSII is composed of 1 copy each of membrane proteins PsbA, PsbB, PsbC, PsbD, PsbE, PsbF, PsbH, PsbI, PsbJ, PsbK, PsbL, PsbM, PsbT, PsbY, PsbZ, Psb30/Ycf12, at least 3 peripheral proteins of the oxygen-evolving complex and a large number of cofactors. It forms dimeric complexes.</text>
</comment>
<comment type="subcellular location">
    <subcellularLocation>
        <location evidence="1">Plastid</location>
        <location evidence="1">Chloroplast thylakoid membrane</location>
        <topology evidence="1">Multi-pass membrane protein</topology>
    </subcellularLocation>
</comment>
<comment type="similarity">
    <text evidence="1">Belongs to the PsbZ family.</text>
</comment>
<evidence type="ECO:0000255" key="1">
    <source>
        <dbReference type="HAMAP-Rule" id="MF_00644"/>
    </source>
</evidence>
<dbReference type="EMBL" id="AY660566">
    <property type="protein sequence ID" value="AAT80728.1"/>
    <property type="molecule type" value="Genomic_DNA"/>
</dbReference>
<dbReference type="RefSeq" id="YP_209532.1">
    <property type="nucleotide sequence ID" value="NC_006861.1"/>
</dbReference>
<dbReference type="SMR" id="Q5SD09"/>
<dbReference type="GeneID" id="3283797"/>
<dbReference type="GO" id="GO:0009535">
    <property type="term" value="C:chloroplast thylakoid membrane"/>
    <property type="evidence" value="ECO:0007669"/>
    <property type="project" value="UniProtKB-SubCell"/>
</dbReference>
<dbReference type="GO" id="GO:0009539">
    <property type="term" value="C:photosystem II reaction center"/>
    <property type="evidence" value="ECO:0007669"/>
    <property type="project" value="InterPro"/>
</dbReference>
<dbReference type="GO" id="GO:0015979">
    <property type="term" value="P:photosynthesis"/>
    <property type="evidence" value="ECO:0007669"/>
    <property type="project" value="UniProtKB-UniRule"/>
</dbReference>
<dbReference type="GO" id="GO:0042549">
    <property type="term" value="P:photosystem II stabilization"/>
    <property type="evidence" value="ECO:0007669"/>
    <property type="project" value="InterPro"/>
</dbReference>
<dbReference type="Gene3D" id="1.10.287.740">
    <property type="entry name" value="Photosystem II PsbZ, reaction centre"/>
    <property type="match status" value="1"/>
</dbReference>
<dbReference type="HAMAP" id="MF_00644">
    <property type="entry name" value="PSII_PsbZ"/>
    <property type="match status" value="1"/>
</dbReference>
<dbReference type="InterPro" id="IPR002644">
    <property type="entry name" value="PSII_PsbZ"/>
</dbReference>
<dbReference type="InterPro" id="IPR036512">
    <property type="entry name" value="PSII_PsbZ_sf"/>
</dbReference>
<dbReference type="NCBIfam" id="TIGR03043">
    <property type="entry name" value="PS_II_psbZ"/>
    <property type="match status" value="1"/>
</dbReference>
<dbReference type="PANTHER" id="PTHR34971">
    <property type="entry name" value="PHOTOSYSTEM II REACTION CENTER PROTEIN Z"/>
    <property type="match status" value="1"/>
</dbReference>
<dbReference type="PANTHER" id="PTHR34971:SF2">
    <property type="entry name" value="PHOTOSYSTEM II REACTION CENTER PROTEIN Z"/>
    <property type="match status" value="1"/>
</dbReference>
<dbReference type="Pfam" id="PF01737">
    <property type="entry name" value="Ycf9"/>
    <property type="match status" value="1"/>
</dbReference>
<dbReference type="SUPFAM" id="SSF161055">
    <property type="entry name" value="PsbZ-like"/>
    <property type="match status" value="1"/>
</dbReference>
<gene>
    <name evidence="1" type="primary">psbZ</name>
</gene>
<sequence>MTIAFQLAVFASIAIPFILVIGVPVVLASPDGWSSSRNVVFSGASSWIGLVFLVGILNSLIS</sequence>
<proteinExistence type="inferred from homology"/>
<organism>
    <name type="scientific">Huperzia lucidula</name>
    <name type="common">Shining clubmoss</name>
    <name type="synonym">Lycopodium lucidulum</name>
    <dbReference type="NCBI Taxonomy" id="37429"/>
    <lineage>
        <taxon>Eukaryota</taxon>
        <taxon>Viridiplantae</taxon>
        <taxon>Streptophyta</taxon>
        <taxon>Embryophyta</taxon>
        <taxon>Tracheophyta</taxon>
        <taxon>Lycopodiopsida</taxon>
        <taxon>Lycopodiales</taxon>
        <taxon>Lycopodiaceae</taxon>
        <taxon>Huperzioideae</taxon>
        <taxon>Huperzia</taxon>
    </lineage>
</organism>
<geneLocation type="chloroplast"/>
<accession>Q5SD09</accession>
<keyword id="KW-0150">Chloroplast</keyword>
<keyword id="KW-0472">Membrane</keyword>
<keyword id="KW-0602">Photosynthesis</keyword>
<keyword id="KW-0604">Photosystem II</keyword>
<keyword id="KW-0934">Plastid</keyword>
<keyword id="KW-0674">Reaction center</keyword>
<keyword id="KW-0793">Thylakoid</keyword>
<keyword id="KW-0812">Transmembrane</keyword>
<keyword id="KW-1133">Transmembrane helix</keyword>
<protein>
    <recommendedName>
        <fullName evidence="1">Photosystem II reaction center protein Z</fullName>
        <shortName evidence="1">PSII-Z</shortName>
    </recommendedName>
</protein>